<comment type="function">
    <text evidence="1">Component of the SRB8-11 complex. The SRB8-11 complex is a regulatory module of the Mediator complex which is itself involved in regulation of basal and activated RNA polymerase II-dependent transcription. The SRB8-11 complex may be involved in the transcriptional repression of a subset of genes regulated by Mediator. It may inhibit the association of the Mediator complex with RNA polymerase II to form the holoenzyme complex. The SRB8-11 complex phosphorylates the C-terminal domain (CTD) of the largest subunit of RNA polymerase II (By similarity).</text>
</comment>
<comment type="catalytic activity">
    <reaction>
        <text>L-seryl-[protein] + ATP = O-phospho-L-seryl-[protein] + ADP + H(+)</text>
        <dbReference type="Rhea" id="RHEA:17989"/>
        <dbReference type="Rhea" id="RHEA-COMP:9863"/>
        <dbReference type="Rhea" id="RHEA-COMP:11604"/>
        <dbReference type="ChEBI" id="CHEBI:15378"/>
        <dbReference type="ChEBI" id="CHEBI:29999"/>
        <dbReference type="ChEBI" id="CHEBI:30616"/>
        <dbReference type="ChEBI" id="CHEBI:83421"/>
        <dbReference type="ChEBI" id="CHEBI:456216"/>
        <dbReference type="EC" id="2.7.11.22"/>
    </reaction>
</comment>
<comment type="catalytic activity">
    <reaction>
        <text>L-threonyl-[protein] + ATP = O-phospho-L-threonyl-[protein] + ADP + H(+)</text>
        <dbReference type="Rhea" id="RHEA:46608"/>
        <dbReference type="Rhea" id="RHEA-COMP:11060"/>
        <dbReference type="Rhea" id="RHEA-COMP:11605"/>
        <dbReference type="ChEBI" id="CHEBI:15378"/>
        <dbReference type="ChEBI" id="CHEBI:30013"/>
        <dbReference type="ChEBI" id="CHEBI:30616"/>
        <dbReference type="ChEBI" id="CHEBI:61977"/>
        <dbReference type="ChEBI" id="CHEBI:456216"/>
        <dbReference type="EC" id="2.7.11.22"/>
    </reaction>
</comment>
<comment type="catalytic activity">
    <reaction>
        <text>[DNA-directed RNA polymerase] + ATP = phospho-[DNA-directed RNA polymerase] + ADP + H(+)</text>
        <dbReference type="Rhea" id="RHEA:10216"/>
        <dbReference type="Rhea" id="RHEA-COMP:11321"/>
        <dbReference type="Rhea" id="RHEA-COMP:11322"/>
        <dbReference type="ChEBI" id="CHEBI:15378"/>
        <dbReference type="ChEBI" id="CHEBI:30616"/>
        <dbReference type="ChEBI" id="CHEBI:43176"/>
        <dbReference type="ChEBI" id="CHEBI:68546"/>
        <dbReference type="ChEBI" id="CHEBI:456216"/>
        <dbReference type="EC" id="2.7.11.23"/>
    </reaction>
</comment>
<comment type="cofactor">
    <cofactor evidence="1">
        <name>Mg(2+)</name>
        <dbReference type="ChEBI" id="CHEBI:18420"/>
    </cofactor>
</comment>
<comment type="subunit">
    <text evidence="1">Component of the SRB8-11 complex, a regulatory module of the Mediator complex.</text>
</comment>
<comment type="subcellular location">
    <subcellularLocation>
        <location evidence="5">Nucleus</location>
    </subcellularLocation>
</comment>
<comment type="similarity">
    <text evidence="5">Belongs to the protein kinase superfamily. CMGC Ser/Thr protein kinase family. CDC2/CDKX subfamily.</text>
</comment>
<protein>
    <recommendedName>
        <fullName>Serine/threonine-protein kinase SSN3</fullName>
        <ecNumber>2.7.11.22</ecNumber>
        <ecNumber>2.7.11.23</ecNumber>
    </recommendedName>
    <alternativeName>
        <fullName>Cyclin-dependent kinase 8</fullName>
    </alternativeName>
    <alternativeName>
        <fullName>KlSRB10</fullName>
    </alternativeName>
</protein>
<gene>
    <name type="primary">SSN3</name>
    <name type="synonym">CDK8</name>
    <name type="synonym">SRB10</name>
    <name type="ordered locus">KLLA0D11814g</name>
</gene>
<proteinExistence type="inferred from homology"/>
<dbReference type="EC" id="2.7.11.22"/>
<dbReference type="EC" id="2.7.11.23"/>
<dbReference type="EMBL" id="AJ532841">
    <property type="protein sequence ID" value="CAD58722.1"/>
    <property type="molecule type" value="Genomic_DNA"/>
</dbReference>
<dbReference type="EMBL" id="CR382124">
    <property type="protein sequence ID" value="CAH00684.1"/>
    <property type="molecule type" value="Genomic_DNA"/>
</dbReference>
<dbReference type="RefSeq" id="XP_453588.1">
    <property type="nucleotide sequence ID" value="XM_453588.1"/>
</dbReference>
<dbReference type="SMR" id="Q6CR51"/>
<dbReference type="FunCoup" id="Q6CR51">
    <property type="interactions" value="1205"/>
</dbReference>
<dbReference type="STRING" id="284590.Q6CR51"/>
<dbReference type="PaxDb" id="284590-Q6CR51"/>
<dbReference type="KEGG" id="kla:KLLA0_D11814g"/>
<dbReference type="eggNOG" id="KOG0666">
    <property type="taxonomic scope" value="Eukaryota"/>
</dbReference>
<dbReference type="HOGENOM" id="CLU_000288_181_6_1"/>
<dbReference type="InParanoid" id="Q6CR51"/>
<dbReference type="OMA" id="IYMVSEF"/>
<dbReference type="Proteomes" id="UP000000598">
    <property type="component" value="Chromosome D"/>
</dbReference>
<dbReference type="GO" id="GO:0016592">
    <property type="term" value="C:mediator complex"/>
    <property type="evidence" value="ECO:0007669"/>
    <property type="project" value="TreeGrafter"/>
</dbReference>
<dbReference type="GO" id="GO:1902554">
    <property type="term" value="C:serine/threonine protein kinase complex"/>
    <property type="evidence" value="ECO:0007669"/>
    <property type="project" value="UniProtKB-ARBA"/>
</dbReference>
<dbReference type="GO" id="GO:0005524">
    <property type="term" value="F:ATP binding"/>
    <property type="evidence" value="ECO:0007669"/>
    <property type="project" value="UniProtKB-KW"/>
</dbReference>
<dbReference type="GO" id="GO:0004693">
    <property type="term" value="F:cyclin-dependent protein serine/threonine kinase activity"/>
    <property type="evidence" value="ECO:0007669"/>
    <property type="project" value="UniProtKB-EC"/>
</dbReference>
<dbReference type="GO" id="GO:0046872">
    <property type="term" value="F:metal ion binding"/>
    <property type="evidence" value="ECO:0007669"/>
    <property type="project" value="UniProtKB-KW"/>
</dbReference>
<dbReference type="GO" id="GO:0106310">
    <property type="term" value="F:protein serine kinase activity"/>
    <property type="evidence" value="ECO:0007669"/>
    <property type="project" value="RHEA"/>
</dbReference>
<dbReference type="GO" id="GO:0008353">
    <property type="term" value="F:RNA polymerase II CTD heptapeptide repeat kinase activity"/>
    <property type="evidence" value="ECO:0007669"/>
    <property type="project" value="UniProtKB-EC"/>
</dbReference>
<dbReference type="GO" id="GO:0009891">
    <property type="term" value="P:positive regulation of biosynthetic process"/>
    <property type="evidence" value="ECO:0007669"/>
    <property type="project" value="UniProtKB-ARBA"/>
</dbReference>
<dbReference type="CDD" id="cd07842">
    <property type="entry name" value="STKc_CDK8_like"/>
    <property type="match status" value="1"/>
</dbReference>
<dbReference type="FunFam" id="1.10.510.10:FF:000408">
    <property type="entry name" value="Serine/threonine-protein kinase SSN3"/>
    <property type="match status" value="1"/>
</dbReference>
<dbReference type="Gene3D" id="3.30.200.20">
    <property type="entry name" value="Phosphorylase Kinase, domain 1"/>
    <property type="match status" value="1"/>
</dbReference>
<dbReference type="Gene3D" id="1.10.510.10">
    <property type="entry name" value="Transferase(Phosphotransferase) domain 1"/>
    <property type="match status" value="1"/>
</dbReference>
<dbReference type="InterPro" id="IPR050108">
    <property type="entry name" value="CDK"/>
</dbReference>
<dbReference type="InterPro" id="IPR011009">
    <property type="entry name" value="Kinase-like_dom_sf"/>
</dbReference>
<dbReference type="InterPro" id="IPR000719">
    <property type="entry name" value="Prot_kinase_dom"/>
</dbReference>
<dbReference type="InterPro" id="IPR008271">
    <property type="entry name" value="Ser/Thr_kinase_AS"/>
</dbReference>
<dbReference type="PANTHER" id="PTHR24056">
    <property type="entry name" value="CELL DIVISION PROTEIN KINASE"/>
    <property type="match status" value="1"/>
</dbReference>
<dbReference type="PANTHER" id="PTHR24056:SF495">
    <property type="entry name" value="CYCLIN-DEPENDENT KINASE 8-RELATED"/>
    <property type="match status" value="1"/>
</dbReference>
<dbReference type="Pfam" id="PF00069">
    <property type="entry name" value="Pkinase"/>
    <property type="match status" value="1"/>
</dbReference>
<dbReference type="SMART" id="SM00220">
    <property type="entry name" value="S_TKc"/>
    <property type="match status" value="1"/>
</dbReference>
<dbReference type="SUPFAM" id="SSF56112">
    <property type="entry name" value="Protein kinase-like (PK-like)"/>
    <property type="match status" value="1"/>
</dbReference>
<dbReference type="PROSITE" id="PS50011">
    <property type="entry name" value="PROTEIN_KINASE_DOM"/>
    <property type="match status" value="1"/>
</dbReference>
<dbReference type="PROSITE" id="PS00108">
    <property type="entry name" value="PROTEIN_KINASE_ST"/>
    <property type="match status" value="1"/>
</dbReference>
<name>SSN3_KLULA</name>
<accession>Q6CR51</accession>
<accession>Q70W23</accession>
<keyword id="KW-0010">Activator</keyword>
<keyword id="KW-0067">ATP-binding</keyword>
<keyword id="KW-0418">Kinase</keyword>
<keyword id="KW-0460">Magnesium</keyword>
<keyword id="KW-0479">Metal-binding</keyword>
<keyword id="KW-0547">Nucleotide-binding</keyword>
<keyword id="KW-0539">Nucleus</keyword>
<keyword id="KW-1185">Reference proteome</keyword>
<keyword id="KW-0678">Repressor</keyword>
<keyword id="KW-0723">Serine/threonine-protein kinase</keyword>
<keyword id="KW-0804">Transcription</keyword>
<keyword id="KW-0805">Transcription regulation</keyword>
<keyword id="KW-0808">Transferase</keyword>
<organism>
    <name type="scientific">Kluyveromyces lactis (strain ATCC 8585 / CBS 2359 / DSM 70799 / NBRC 1267 / NRRL Y-1140 / WM37)</name>
    <name type="common">Yeast</name>
    <name type="synonym">Candida sphaerica</name>
    <dbReference type="NCBI Taxonomy" id="284590"/>
    <lineage>
        <taxon>Eukaryota</taxon>
        <taxon>Fungi</taxon>
        <taxon>Dikarya</taxon>
        <taxon>Ascomycota</taxon>
        <taxon>Saccharomycotina</taxon>
        <taxon>Saccharomycetes</taxon>
        <taxon>Saccharomycetales</taxon>
        <taxon>Saccharomycetaceae</taxon>
        <taxon>Kluyveromyces</taxon>
    </lineage>
</organism>
<feature type="chain" id="PRO_0000312946" description="Serine/threonine-protein kinase SSN3">
    <location>
        <begin position="1"/>
        <end position="593"/>
    </location>
</feature>
<feature type="domain" description="Protein kinase" evidence="2">
    <location>
        <begin position="90"/>
        <end position="489"/>
    </location>
</feature>
<feature type="region of interest" description="Disordered" evidence="4">
    <location>
        <begin position="161"/>
        <end position="199"/>
    </location>
</feature>
<feature type="region of interest" description="Disordered" evidence="4">
    <location>
        <begin position="517"/>
        <end position="551"/>
    </location>
</feature>
<feature type="region of interest" description="Disordered" evidence="4">
    <location>
        <begin position="569"/>
        <end position="593"/>
    </location>
</feature>
<feature type="compositionally biased region" description="Polar residues" evidence="4">
    <location>
        <begin position="169"/>
        <end position="185"/>
    </location>
</feature>
<feature type="compositionally biased region" description="Low complexity" evidence="4">
    <location>
        <begin position="186"/>
        <end position="199"/>
    </location>
</feature>
<feature type="compositionally biased region" description="Polar residues" evidence="4">
    <location>
        <begin position="518"/>
        <end position="536"/>
    </location>
</feature>
<feature type="compositionally biased region" description="Low complexity" evidence="4">
    <location>
        <begin position="540"/>
        <end position="551"/>
    </location>
</feature>
<feature type="compositionally biased region" description="Polar residues" evidence="4">
    <location>
        <begin position="573"/>
        <end position="585"/>
    </location>
</feature>
<feature type="active site" description="Proton acceptor" evidence="2 3">
    <location>
        <position position="312"/>
    </location>
</feature>
<feature type="binding site" evidence="2">
    <location>
        <begin position="96"/>
        <end position="104"/>
    </location>
    <ligand>
        <name>ATP</name>
        <dbReference type="ChEBI" id="CHEBI:30616"/>
    </ligand>
</feature>
<feature type="binding site" evidence="2">
    <location>
        <position position="211"/>
    </location>
    <ligand>
        <name>ATP</name>
        <dbReference type="ChEBI" id="CHEBI:30616"/>
    </ligand>
</feature>
<feature type="sequence conflict" description="In Ref. 1; CAD58722." evidence="5" ref="1">
    <original>N</original>
    <variation>T</variation>
    <location>
        <position position="50"/>
    </location>
</feature>
<reference key="1">
    <citation type="journal article" date="2004" name="Yeast">
        <title>The KlSRB10 gene from Kluyveromyces lactis.</title>
        <authorList>
            <person name="Nunez L."/>
            <person name="Fernandez-Otero C."/>
            <person name="Rodriguez-Belmonte E."/>
            <person name="Cerdan M.E."/>
        </authorList>
    </citation>
    <scope>NUCLEOTIDE SEQUENCE [GENOMIC DNA]</scope>
</reference>
<reference key="2">
    <citation type="journal article" date="2004" name="Nature">
        <title>Genome evolution in yeasts.</title>
        <authorList>
            <person name="Dujon B."/>
            <person name="Sherman D."/>
            <person name="Fischer G."/>
            <person name="Durrens P."/>
            <person name="Casaregola S."/>
            <person name="Lafontaine I."/>
            <person name="de Montigny J."/>
            <person name="Marck C."/>
            <person name="Neuveglise C."/>
            <person name="Talla E."/>
            <person name="Goffard N."/>
            <person name="Frangeul L."/>
            <person name="Aigle M."/>
            <person name="Anthouard V."/>
            <person name="Babour A."/>
            <person name="Barbe V."/>
            <person name="Barnay S."/>
            <person name="Blanchin S."/>
            <person name="Beckerich J.-M."/>
            <person name="Beyne E."/>
            <person name="Bleykasten C."/>
            <person name="Boisrame A."/>
            <person name="Boyer J."/>
            <person name="Cattolico L."/>
            <person name="Confanioleri F."/>
            <person name="de Daruvar A."/>
            <person name="Despons L."/>
            <person name="Fabre E."/>
            <person name="Fairhead C."/>
            <person name="Ferry-Dumazet H."/>
            <person name="Groppi A."/>
            <person name="Hantraye F."/>
            <person name="Hennequin C."/>
            <person name="Jauniaux N."/>
            <person name="Joyet P."/>
            <person name="Kachouri R."/>
            <person name="Kerrest A."/>
            <person name="Koszul R."/>
            <person name="Lemaire M."/>
            <person name="Lesur I."/>
            <person name="Ma L."/>
            <person name="Muller H."/>
            <person name="Nicaud J.-M."/>
            <person name="Nikolski M."/>
            <person name="Oztas S."/>
            <person name="Ozier-Kalogeropoulos O."/>
            <person name="Pellenz S."/>
            <person name="Potier S."/>
            <person name="Richard G.-F."/>
            <person name="Straub M.-L."/>
            <person name="Suleau A."/>
            <person name="Swennen D."/>
            <person name="Tekaia F."/>
            <person name="Wesolowski-Louvel M."/>
            <person name="Westhof E."/>
            <person name="Wirth B."/>
            <person name="Zeniou-Meyer M."/>
            <person name="Zivanovic Y."/>
            <person name="Bolotin-Fukuhara M."/>
            <person name="Thierry A."/>
            <person name="Bouchier C."/>
            <person name="Caudron B."/>
            <person name="Scarpelli C."/>
            <person name="Gaillardin C."/>
            <person name="Weissenbach J."/>
            <person name="Wincker P."/>
            <person name="Souciet J.-L."/>
        </authorList>
    </citation>
    <scope>NUCLEOTIDE SEQUENCE [LARGE SCALE GENOMIC DNA]</scope>
    <source>
        <strain>ATCC 8585 / CBS 2359 / DSM 70799 / NBRC 1267 / NRRL Y-1140 / WM37</strain>
    </source>
</reference>
<evidence type="ECO:0000250" key="1"/>
<evidence type="ECO:0000255" key="2">
    <source>
        <dbReference type="PROSITE-ProRule" id="PRU00159"/>
    </source>
</evidence>
<evidence type="ECO:0000255" key="3">
    <source>
        <dbReference type="PROSITE-ProRule" id="PRU10027"/>
    </source>
</evidence>
<evidence type="ECO:0000256" key="4">
    <source>
        <dbReference type="SAM" id="MobiDB-lite"/>
    </source>
</evidence>
<evidence type="ECO:0000305" key="5"/>
<sequence length="593" mass="67013">MYGNQQNNSNPYQMSYYRMNNGQGQGTNRWPQQLSHQEMLAGHSQQILNNNKPAGNQSKPPIVMASNNVFSIGPYRQRKDSSRISVLQKYEIIGYIAAGTYGKVYKAKARDYQNGMNRDNVIILDSPDSVSADSNLDINSINRSTRQQEANDNLTTMDFRKPSHKRFTPPNNSNSTQIRSNSGSETNVRINSSSITNNSRKPSQIQFYAIKKFKTEREGVEHYTGISQSACREMSLCRELDNNHLTKLVEIFLEKKSIYMVSEFAEHDLLQIIHFHSHPEKRLIPPRMLKSIMWQILDGVSYLHQNWILHRDLKPANIMVTVDGCVKIGDLGLARKFNNMVQTLYTGDKVIVTIWYRAPELILGARHYTPAIDLWAVGCIFAELIGLRPIFKGEEAKMESKKSVLFQANQFQKILEVMGSPDHKIWPNIDSYPEYLQLAKMPKYRDNLTAWYQTAGGKDKTALDILYRLLQYDPIKRIDAIDALDHVYFTNGDPPVCENVFEGLNYKYPPRRIHTNDNDITNVGNDNNQANHSQKQPMHGNNNNKNGNMNGLGVNKRILAAAAAAAAAAAVSGNGNNPTSNTATGGSARKKRK</sequence>